<name>TRPA_METC4</name>
<organism>
    <name type="scientific">Methylorubrum extorquens (strain CM4 / NCIMB 13688)</name>
    <name type="common">Methylobacterium extorquens</name>
    <dbReference type="NCBI Taxonomy" id="440085"/>
    <lineage>
        <taxon>Bacteria</taxon>
        <taxon>Pseudomonadati</taxon>
        <taxon>Pseudomonadota</taxon>
        <taxon>Alphaproteobacteria</taxon>
        <taxon>Hyphomicrobiales</taxon>
        <taxon>Methylobacteriaceae</taxon>
        <taxon>Methylorubrum</taxon>
    </lineage>
</organism>
<evidence type="ECO:0000255" key="1">
    <source>
        <dbReference type="HAMAP-Rule" id="MF_00131"/>
    </source>
</evidence>
<gene>
    <name evidence="1" type="primary">trpA</name>
    <name type="ordered locus">Mchl_4910</name>
</gene>
<accession>B7KSK7</accession>
<reference key="1">
    <citation type="submission" date="2008-12" db="EMBL/GenBank/DDBJ databases">
        <title>Complete sequence of chromosome of Methylobacterium chloromethanicum CM4.</title>
        <authorList>
            <consortium name="US DOE Joint Genome Institute"/>
            <person name="Lucas S."/>
            <person name="Copeland A."/>
            <person name="Lapidus A."/>
            <person name="Glavina del Rio T."/>
            <person name="Dalin E."/>
            <person name="Tice H."/>
            <person name="Bruce D."/>
            <person name="Goodwin L."/>
            <person name="Pitluck S."/>
            <person name="Chertkov O."/>
            <person name="Brettin T."/>
            <person name="Detter J.C."/>
            <person name="Han C."/>
            <person name="Larimer F."/>
            <person name="Land M."/>
            <person name="Hauser L."/>
            <person name="Kyrpides N."/>
            <person name="Mikhailova N."/>
            <person name="Marx C."/>
            <person name="Richardson P."/>
        </authorList>
    </citation>
    <scope>NUCLEOTIDE SEQUENCE [LARGE SCALE GENOMIC DNA]</scope>
    <source>
        <strain>CM4 / NCIMB 13688</strain>
    </source>
</reference>
<dbReference type="EC" id="4.2.1.20" evidence="1"/>
<dbReference type="EMBL" id="CP001298">
    <property type="protein sequence ID" value="ACK85675.1"/>
    <property type="molecule type" value="Genomic_DNA"/>
</dbReference>
<dbReference type="RefSeq" id="WP_015952636.1">
    <property type="nucleotide sequence ID" value="NC_011757.1"/>
</dbReference>
<dbReference type="SMR" id="B7KSK7"/>
<dbReference type="KEGG" id="mch:Mchl_4910"/>
<dbReference type="HOGENOM" id="CLU_016734_0_0_5"/>
<dbReference type="UniPathway" id="UPA00035">
    <property type="reaction ID" value="UER00044"/>
</dbReference>
<dbReference type="Proteomes" id="UP000002385">
    <property type="component" value="Chromosome"/>
</dbReference>
<dbReference type="GO" id="GO:0005829">
    <property type="term" value="C:cytosol"/>
    <property type="evidence" value="ECO:0007669"/>
    <property type="project" value="TreeGrafter"/>
</dbReference>
<dbReference type="GO" id="GO:0004834">
    <property type="term" value="F:tryptophan synthase activity"/>
    <property type="evidence" value="ECO:0007669"/>
    <property type="project" value="UniProtKB-UniRule"/>
</dbReference>
<dbReference type="CDD" id="cd04724">
    <property type="entry name" value="Tryptophan_synthase_alpha"/>
    <property type="match status" value="1"/>
</dbReference>
<dbReference type="FunFam" id="3.20.20.70:FF:000037">
    <property type="entry name" value="Tryptophan synthase alpha chain"/>
    <property type="match status" value="1"/>
</dbReference>
<dbReference type="Gene3D" id="3.20.20.70">
    <property type="entry name" value="Aldolase class I"/>
    <property type="match status" value="1"/>
</dbReference>
<dbReference type="HAMAP" id="MF_00131">
    <property type="entry name" value="Trp_synth_alpha"/>
    <property type="match status" value="1"/>
</dbReference>
<dbReference type="InterPro" id="IPR013785">
    <property type="entry name" value="Aldolase_TIM"/>
</dbReference>
<dbReference type="InterPro" id="IPR011060">
    <property type="entry name" value="RibuloseP-bd_barrel"/>
</dbReference>
<dbReference type="InterPro" id="IPR002028">
    <property type="entry name" value="Trp_synthase_suA"/>
</dbReference>
<dbReference type="NCBIfam" id="TIGR00262">
    <property type="entry name" value="trpA"/>
    <property type="match status" value="1"/>
</dbReference>
<dbReference type="PANTHER" id="PTHR43406:SF1">
    <property type="entry name" value="TRYPTOPHAN SYNTHASE ALPHA CHAIN, CHLOROPLASTIC"/>
    <property type="match status" value="1"/>
</dbReference>
<dbReference type="PANTHER" id="PTHR43406">
    <property type="entry name" value="TRYPTOPHAN SYNTHASE, ALPHA CHAIN"/>
    <property type="match status" value="1"/>
</dbReference>
<dbReference type="Pfam" id="PF00290">
    <property type="entry name" value="Trp_syntA"/>
    <property type="match status" value="1"/>
</dbReference>
<dbReference type="SUPFAM" id="SSF51366">
    <property type="entry name" value="Ribulose-phoshate binding barrel"/>
    <property type="match status" value="1"/>
</dbReference>
<proteinExistence type="inferred from homology"/>
<keyword id="KW-0028">Amino-acid biosynthesis</keyword>
<keyword id="KW-0057">Aromatic amino acid biosynthesis</keyword>
<keyword id="KW-0456">Lyase</keyword>
<keyword id="KW-0822">Tryptophan biosynthesis</keyword>
<protein>
    <recommendedName>
        <fullName evidence="1">Tryptophan synthase alpha chain</fullName>
        <ecNumber evidence="1">4.2.1.20</ecNumber>
    </recommendedName>
</protein>
<feature type="chain" id="PRO_1000198717" description="Tryptophan synthase alpha chain">
    <location>
        <begin position="1"/>
        <end position="280"/>
    </location>
</feature>
<feature type="active site" description="Proton acceptor" evidence="1">
    <location>
        <position position="50"/>
    </location>
</feature>
<feature type="active site" description="Proton acceptor" evidence="1">
    <location>
        <position position="61"/>
    </location>
</feature>
<sequence length="280" mass="28912">MTARIDAAFARCRAEGRAALVTYVMAGDPDPETSLKVLEALPKAGADIVEFGLPFTDPMADGPAIQAAGLRALKAGQDLRGTLALVRRFREGDDQTPVVLMGYYNPIHTYGVPHFLEDAQAAGIDGLIVVDLPPEEDEELCLPALEKGLAFIRLATPTTDEARLPAVLANTAGFVYYVSITGVTGTATPDFGRVSQAVSRITAHTNLPVVVGFGVKTGAHAAEIARGADGVVVGSALVDALARSLEPGDRAGSGTVEAVASLVRELAQGVRSAAKAPAGA</sequence>
<comment type="function">
    <text evidence="1">The alpha subunit is responsible for the aldol cleavage of indoleglycerol phosphate to indole and glyceraldehyde 3-phosphate.</text>
</comment>
<comment type="catalytic activity">
    <reaction evidence="1">
        <text>(1S,2R)-1-C-(indol-3-yl)glycerol 3-phosphate + L-serine = D-glyceraldehyde 3-phosphate + L-tryptophan + H2O</text>
        <dbReference type="Rhea" id="RHEA:10532"/>
        <dbReference type="ChEBI" id="CHEBI:15377"/>
        <dbReference type="ChEBI" id="CHEBI:33384"/>
        <dbReference type="ChEBI" id="CHEBI:57912"/>
        <dbReference type="ChEBI" id="CHEBI:58866"/>
        <dbReference type="ChEBI" id="CHEBI:59776"/>
        <dbReference type="EC" id="4.2.1.20"/>
    </reaction>
</comment>
<comment type="pathway">
    <text evidence="1">Amino-acid biosynthesis; L-tryptophan biosynthesis; L-tryptophan from chorismate: step 5/5.</text>
</comment>
<comment type="subunit">
    <text evidence="1">Tetramer of two alpha and two beta chains.</text>
</comment>
<comment type="similarity">
    <text evidence="1">Belongs to the TrpA family.</text>
</comment>